<protein>
    <recommendedName>
        <fullName>Fructose-bisphosphate aldolase, cytoplasmic isozyme 2</fullName>
        <ecNumber>4.1.2.13</ecNumber>
    </recommendedName>
</protein>
<feature type="chain" id="PRO_0000216924" description="Fructose-bisphosphate aldolase, cytoplasmic isozyme 2">
    <location>
        <begin position="1"/>
        <end position="359"/>
    </location>
</feature>
<feature type="active site" description="Proton acceptor" evidence="1">
    <location>
        <position position="184"/>
    </location>
</feature>
<feature type="active site" description="Schiff-base intermediate with dihydroxyacetone-P" evidence="1">
    <location>
        <position position="226"/>
    </location>
</feature>
<feature type="binding site" evidence="1">
    <location>
        <position position="52"/>
    </location>
    <ligand>
        <name>substrate</name>
    </ligand>
</feature>
<feature type="binding site" evidence="1">
    <location>
        <position position="143"/>
    </location>
    <ligand>
        <name>substrate</name>
    </ligand>
</feature>
<feature type="site" description="Necessary for preference for fructose 1,6-bisphosphate over fructose 1-phosphate" evidence="1">
    <location>
        <position position="359"/>
    </location>
</feature>
<dbReference type="EC" id="4.1.2.13"/>
<dbReference type="EMBL" id="X89829">
    <property type="protein sequence ID" value="CAA61947.1"/>
    <property type="molecule type" value="Genomic_DNA"/>
</dbReference>
<dbReference type="PIR" id="S58167">
    <property type="entry name" value="S58167"/>
</dbReference>
<dbReference type="SMR" id="P46257"/>
<dbReference type="SABIO-RK" id="P46257"/>
<dbReference type="UniPathway" id="UPA00109">
    <property type="reaction ID" value="UER00183"/>
</dbReference>
<dbReference type="GO" id="GO:0005737">
    <property type="term" value="C:cytoplasm"/>
    <property type="evidence" value="ECO:0007669"/>
    <property type="project" value="UniProtKB-SubCell"/>
</dbReference>
<dbReference type="GO" id="GO:0004332">
    <property type="term" value="F:fructose-bisphosphate aldolase activity"/>
    <property type="evidence" value="ECO:0007669"/>
    <property type="project" value="UniProtKB-EC"/>
</dbReference>
<dbReference type="GO" id="GO:0006096">
    <property type="term" value="P:glycolytic process"/>
    <property type="evidence" value="ECO:0007669"/>
    <property type="project" value="UniProtKB-UniPathway"/>
</dbReference>
<dbReference type="CDD" id="cd00948">
    <property type="entry name" value="FBP_aldolase_I_a"/>
    <property type="match status" value="1"/>
</dbReference>
<dbReference type="FunFam" id="3.20.20.70:FF:000068">
    <property type="entry name" value="Fructose-bisphosphate aldolase"/>
    <property type="match status" value="1"/>
</dbReference>
<dbReference type="Gene3D" id="3.20.20.70">
    <property type="entry name" value="Aldolase class I"/>
    <property type="match status" value="1"/>
</dbReference>
<dbReference type="InterPro" id="IPR029768">
    <property type="entry name" value="Aldolase_I_AS"/>
</dbReference>
<dbReference type="InterPro" id="IPR013785">
    <property type="entry name" value="Aldolase_TIM"/>
</dbReference>
<dbReference type="InterPro" id="IPR000741">
    <property type="entry name" value="FBA_I"/>
</dbReference>
<dbReference type="NCBIfam" id="NF033379">
    <property type="entry name" value="FrucBisAld_I"/>
    <property type="match status" value="1"/>
</dbReference>
<dbReference type="PANTHER" id="PTHR11627">
    <property type="entry name" value="FRUCTOSE-BISPHOSPHATE ALDOLASE"/>
    <property type="match status" value="1"/>
</dbReference>
<dbReference type="Pfam" id="PF00274">
    <property type="entry name" value="Glycolytic"/>
    <property type="match status" value="1"/>
</dbReference>
<dbReference type="SUPFAM" id="SSF51569">
    <property type="entry name" value="Aldolase"/>
    <property type="match status" value="1"/>
</dbReference>
<dbReference type="PROSITE" id="PS00158">
    <property type="entry name" value="ALDOLASE_CLASS_I"/>
    <property type="match status" value="1"/>
</dbReference>
<keyword id="KW-0963">Cytoplasm</keyword>
<keyword id="KW-0324">Glycolysis</keyword>
<keyword id="KW-0456">Lyase</keyword>
<keyword id="KW-0704">Schiff base</keyword>
<comment type="catalytic activity">
    <reaction>
        <text>beta-D-fructose 1,6-bisphosphate = D-glyceraldehyde 3-phosphate + dihydroxyacetone phosphate</text>
        <dbReference type="Rhea" id="RHEA:14729"/>
        <dbReference type="ChEBI" id="CHEBI:32966"/>
        <dbReference type="ChEBI" id="CHEBI:57642"/>
        <dbReference type="ChEBI" id="CHEBI:59776"/>
        <dbReference type="EC" id="4.1.2.13"/>
    </reaction>
</comment>
<comment type="pathway">
    <text>Carbohydrate degradation; glycolysis; D-glyceraldehyde 3-phosphate and glycerone phosphate from D-glucose: step 4/4.</text>
</comment>
<comment type="subcellular location">
    <subcellularLocation>
        <location>Cytoplasm</location>
    </subcellularLocation>
</comment>
<comment type="similarity">
    <text evidence="2">Belongs to the class I fructose-bisphosphate aldolase family.</text>
</comment>
<organism>
    <name type="scientific">Pisum sativum</name>
    <name type="common">Garden pea</name>
    <name type="synonym">Lathyrus oleraceus</name>
    <dbReference type="NCBI Taxonomy" id="3888"/>
    <lineage>
        <taxon>Eukaryota</taxon>
        <taxon>Viridiplantae</taxon>
        <taxon>Streptophyta</taxon>
        <taxon>Embryophyta</taxon>
        <taxon>Tracheophyta</taxon>
        <taxon>Spermatophyta</taxon>
        <taxon>Magnoliopsida</taxon>
        <taxon>eudicotyledons</taxon>
        <taxon>Gunneridae</taxon>
        <taxon>Pentapetalae</taxon>
        <taxon>rosids</taxon>
        <taxon>fabids</taxon>
        <taxon>Fabales</taxon>
        <taxon>Fabaceae</taxon>
        <taxon>Papilionoideae</taxon>
        <taxon>50 kb inversion clade</taxon>
        <taxon>NPAAA clade</taxon>
        <taxon>Hologalegina</taxon>
        <taxon>IRL clade</taxon>
        <taxon>Fabeae</taxon>
        <taxon>Pisum</taxon>
    </lineage>
</organism>
<proteinExistence type="inferred from homology"/>
<sequence>MSHFKSKYHDELIANAAYIGTPGKGILAADESTGTIGKRLSSINVENVESNRQALRELLFTASWLFLQYLSGVILFEETLYQKTAAGKPFVDVLNEAGVLPGIKVDKGTVELAGTDGETTTQGLDGLGARCRKYYEAGARFAKWRAVLKIGANEPSEHSIHENAYGLARYAVICQENGLVPIVEPEILVDGSHDILKCAAITERVLAATYKALSDHHVILEGTLLKPNMVTPGSDAPKVAPEVIAEHTVRALQRTVPAAVPAVVFLSGGQSEEEASVNLNAINQIKGKKPWTLSFSFGRALQQSTLKAWGGKTENVKAAQDALLTRAKANSEATLGTYKGASNLGAGASESLHVKDYKY</sequence>
<name>ALF2_PEA</name>
<reference key="1">
    <citation type="submission" date="1995-07" db="EMBL/GenBank/DDBJ databases">
        <authorList>
            <person name="Pelzer-Reith B."/>
            <person name="Schnarrenberger C."/>
        </authorList>
    </citation>
    <scope>NUCLEOTIDE SEQUENCE [GENOMIC DNA]</scope>
    <source>
        <tissue>Leaf</tissue>
    </source>
</reference>
<evidence type="ECO:0000250" key="1"/>
<evidence type="ECO:0000305" key="2"/>
<accession>P46257</accession>